<protein>
    <recommendedName>
        <fullName>Probable mitochondrial adenine nucleotide transporter BTL1</fullName>
    </recommendedName>
    <alternativeName>
        <fullName>Adenine nucleotide transporter BT1-like protein 1</fullName>
    </alternativeName>
</protein>
<gene>
    <name type="ordered locus">At3g20240</name>
    <name type="ORF">MAL21.26</name>
</gene>
<comment type="function">
    <text evidence="1">Probable mitochondrial adenylate carrier that catalyzes the transport of ATP, ADP and AMP.</text>
</comment>
<comment type="subcellular location">
    <subcellularLocation>
        <location evidence="1">Mitochondrion inner membrane</location>
        <topology evidence="1">Multi-pass membrane protein</topology>
    </subcellularLocation>
</comment>
<comment type="similarity">
    <text evidence="3">Belongs to the mitochondrial carrier (TC 2.A.29) family.</text>
</comment>
<comment type="sequence caution" evidence="3">
    <conflict type="erroneous initiation">
        <sequence resource="EMBL-CDS" id="AAM61623"/>
    </conflict>
    <text>Truncated N-terminus.</text>
</comment>
<feature type="chain" id="PRO_0000420803" description="Probable mitochondrial adenine nucleotide transporter BTL1">
    <location>
        <begin position="1"/>
        <end position="348"/>
    </location>
</feature>
<feature type="transmembrane region" description="Helical; Name=1" evidence="2">
    <location>
        <begin position="52"/>
        <end position="72"/>
    </location>
</feature>
<feature type="transmembrane region" description="Helical; Name=2" evidence="2">
    <location>
        <begin position="104"/>
        <end position="124"/>
    </location>
</feature>
<feature type="transmembrane region" description="Helical; Name=3" evidence="2">
    <location>
        <begin position="156"/>
        <end position="176"/>
    </location>
</feature>
<feature type="transmembrane region" description="Helical; Name=4" evidence="2">
    <location>
        <begin position="213"/>
        <end position="233"/>
    </location>
</feature>
<feature type="transmembrane region" description="Helical; Name=5" evidence="2">
    <location>
        <begin position="256"/>
        <end position="276"/>
    </location>
</feature>
<feature type="transmembrane region" description="Helical; Name=6" evidence="2">
    <location>
        <begin position="321"/>
        <end position="341"/>
    </location>
</feature>
<feature type="repeat" description="Solcar 1">
    <location>
        <begin position="46"/>
        <end position="129"/>
    </location>
</feature>
<feature type="repeat" description="Solcar 2">
    <location>
        <begin position="157"/>
        <end position="241"/>
    </location>
</feature>
<feature type="repeat" description="Solcar 3">
    <location>
        <begin position="251"/>
        <end position="338"/>
    </location>
</feature>
<name>BRTL1_ARATH</name>
<proteinExistence type="evidence at transcript level"/>
<sequence length="348" mass="37904">MAMVVPKEGLVVMDKESVSSASSDSHLRLQPHFPDFTIPVKDFFKSREAREFLSGALAGAMTKAVLAPLETIRTRMIVGVGSRSIPGSFLEVVQKQGWQGLWAGNEINMIRIIPTQAIELGTFEWVKRAMTSAQVKLKKIEDAKIEIGDFSFSPSISWISPVAVAGASAGIASTLVCHPLEVLKDRLTVSPEIYPSLSLAIPRIFRADGIRGFYAGLGPTLVGMLPYSTCYYFMYDKMKTSYCKSKNKKALSRPEMLVLGALAGLTASTISFPLEVARKRLMVGALKGECPPNMAAAIAEVVKKEGVMGLYRGWGASCLKVMPSSGITWVFYEAWKDILLAANTKPLI</sequence>
<organism>
    <name type="scientific">Arabidopsis thaliana</name>
    <name type="common">Mouse-ear cress</name>
    <dbReference type="NCBI Taxonomy" id="3702"/>
    <lineage>
        <taxon>Eukaryota</taxon>
        <taxon>Viridiplantae</taxon>
        <taxon>Streptophyta</taxon>
        <taxon>Embryophyta</taxon>
        <taxon>Tracheophyta</taxon>
        <taxon>Spermatophyta</taxon>
        <taxon>Magnoliopsida</taxon>
        <taxon>eudicotyledons</taxon>
        <taxon>Gunneridae</taxon>
        <taxon>Pentapetalae</taxon>
        <taxon>rosids</taxon>
        <taxon>malvids</taxon>
        <taxon>Brassicales</taxon>
        <taxon>Brassicaceae</taxon>
        <taxon>Camelineae</taxon>
        <taxon>Arabidopsis</taxon>
    </lineage>
</organism>
<evidence type="ECO:0000250" key="1"/>
<evidence type="ECO:0000255" key="2"/>
<evidence type="ECO:0000305" key="3"/>
<accession>Q9LJX5</accession>
<accession>Q8LF38</accession>
<reference key="1">
    <citation type="journal article" date="2000" name="DNA Res.">
        <title>Structural analysis of Arabidopsis thaliana chromosome 3. II. Sequence features of the 4,251,695 bp regions covered by 90 P1, TAC and BAC clones.</title>
        <authorList>
            <person name="Kaneko T."/>
            <person name="Katoh T."/>
            <person name="Sato S."/>
            <person name="Nakamura Y."/>
            <person name="Asamizu E."/>
            <person name="Tabata S."/>
        </authorList>
    </citation>
    <scope>NUCLEOTIDE SEQUENCE [LARGE SCALE GENOMIC DNA]</scope>
    <source>
        <strain>cv. Columbia</strain>
    </source>
</reference>
<reference key="2">
    <citation type="journal article" date="2017" name="Plant J.">
        <title>Araport11: a complete reannotation of the Arabidopsis thaliana reference genome.</title>
        <authorList>
            <person name="Cheng C.Y."/>
            <person name="Krishnakumar V."/>
            <person name="Chan A.P."/>
            <person name="Thibaud-Nissen F."/>
            <person name="Schobel S."/>
            <person name="Town C.D."/>
        </authorList>
    </citation>
    <scope>GENOME REANNOTATION</scope>
    <source>
        <strain>cv. Columbia</strain>
    </source>
</reference>
<reference key="3">
    <citation type="journal article" date="2003" name="Science">
        <title>Empirical analysis of transcriptional activity in the Arabidopsis genome.</title>
        <authorList>
            <person name="Yamada K."/>
            <person name="Lim J."/>
            <person name="Dale J.M."/>
            <person name="Chen H."/>
            <person name="Shinn P."/>
            <person name="Palm C.J."/>
            <person name="Southwick A.M."/>
            <person name="Wu H.C."/>
            <person name="Kim C.J."/>
            <person name="Nguyen M."/>
            <person name="Pham P.K."/>
            <person name="Cheuk R.F."/>
            <person name="Karlin-Newmann G."/>
            <person name="Liu S.X."/>
            <person name="Lam B."/>
            <person name="Sakano H."/>
            <person name="Wu T."/>
            <person name="Yu G."/>
            <person name="Miranda M."/>
            <person name="Quach H.L."/>
            <person name="Tripp M."/>
            <person name="Chang C.H."/>
            <person name="Lee J.M."/>
            <person name="Toriumi M.J."/>
            <person name="Chan M.M."/>
            <person name="Tang C.C."/>
            <person name="Onodera C.S."/>
            <person name="Deng J.M."/>
            <person name="Akiyama K."/>
            <person name="Ansari Y."/>
            <person name="Arakawa T."/>
            <person name="Banh J."/>
            <person name="Banno F."/>
            <person name="Bowser L."/>
            <person name="Brooks S.Y."/>
            <person name="Carninci P."/>
            <person name="Chao Q."/>
            <person name="Choy N."/>
            <person name="Enju A."/>
            <person name="Goldsmith A.D."/>
            <person name="Gurjal M."/>
            <person name="Hansen N.F."/>
            <person name="Hayashizaki Y."/>
            <person name="Johnson-Hopson C."/>
            <person name="Hsuan V.W."/>
            <person name="Iida K."/>
            <person name="Karnes M."/>
            <person name="Khan S."/>
            <person name="Koesema E."/>
            <person name="Ishida J."/>
            <person name="Jiang P.X."/>
            <person name="Jones T."/>
            <person name="Kawai J."/>
            <person name="Kamiya A."/>
            <person name="Meyers C."/>
            <person name="Nakajima M."/>
            <person name="Narusaka M."/>
            <person name="Seki M."/>
            <person name="Sakurai T."/>
            <person name="Satou M."/>
            <person name="Tamse R."/>
            <person name="Vaysberg M."/>
            <person name="Wallender E.K."/>
            <person name="Wong C."/>
            <person name="Yamamura Y."/>
            <person name="Yuan S."/>
            <person name="Shinozaki K."/>
            <person name="Davis R.W."/>
            <person name="Theologis A."/>
            <person name="Ecker J.R."/>
        </authorList>
    </citation>
    <scope>NUCLEOTIDE SEQUENCE [LARGE SCALE MRNA]</scope>
    <source>
        <strain>cv. Columbia</strain>
    </source>
</reference>
<reference key="4">
    <citation type="submission" date="2006-07" db="EMBL/GenBank/DDBJ databases">
        <title>Large-scale analysis of RIKEN Arabidopsis full-length (RAFL) cDNAs.</title>
        <authorList>
            <person name="Totoki Y."/>
            <person name="Seki M."/>
            <person name="Ishida J."/>
            <person name="Nakajima M."/>
            <person name="Enju A."/>
            <person name="Kamiya A."/>
            <person name="Narusaka M."/>
            <person name="Shin-i T."/>
            <person name="Nakagawa M."/>
            <person name="Sakamoto N."/>
            <person name="Oishi K."/>
            <person name="Kohara Y."/>
            <person name="Kobayashi M."/>
            <person name="Toyoda A."/>
            <person name="Sakaki Y."/>
            <person name="Sakurai T."/>
            <person name="Iida K."/>
            <person name="Akiyama K."/>
            <person name="Satou M."/>
            <person name="Toyoda T."/>
            <person name="Konagaya A."/>
            <person name="Carninci P."/>
            <person name="Kawai J."/>
            <person name="Hayashizaki Y."/>
            <person name="Shinozaki K."/>
        </authorList>
    </citation>
    <scope>NUCLEOTIDE SEQUENCE [LARGE SCALE MRNA]</scope>
    <source>
        <strain>cv. Columbia</strain>
    </source>
</reference>
<reference key="5">
    <citation type="submission" date="2002-03" db="EMBL/GenBank/DDBJ databases">
        <title>Full-length cDNA from Arabidopsis thaliana.</title>
        <authorList>
            <person name="Brover V.V."/>
            <person name="Troukhan M.E."/>
            <person name="Alexandrov N.A."/>
            <person name="Lu Y.-P."/>
            <person name="Flavell R.B."/>
            <person name="Feldmann K.A."/>
        </authorList>
    </citation>
    <scope>NUCLEOTIDE SEQUENCE [LARGE SCALE MRNA]</scope>
</reference>
<reference key="6">
    <citation type="journal article" date="2004" name="Trends Plant Sci.">
        <title>The growing family of mitochondrial carriers in Arabidopsis.</title>
        <authorList>
            <person name="Picault N."/>
            <person name="Hodges M."/>
            <person name="Palmieri L."/>
            <person name="Palmieri F."/>
        </authorList>
    </citation>
    <scope>GENE FAMILY</scope>
</reference>
<keyword id="KW-0472">Membrane</keyword>
<keyword id="KW-0496">Mitochondrion</keyword>
<keyword id="KW-0999">Mitochondrion inner membrane</keyword>
<keyword id="KW-1185">Reference proteome</keyword>
<keyword id="KW-0677">Repeat</keyword>
<keyword id="KW-0812">Transmembrane</keyword>
<keyword id="KW-1133">Transmembrane helix</keyword>
<keyword id="KW-0813">Transport</keyword>
<dbReference type="EMBL" id="AP000383">
    <property type="protein sequence ID" value="BAB01883.1"/>
    <property type="molecule type" value="Genomic_DNA"/>
</dbReference>
<dbReference type="EMBL" id="CP002686">
    <property type="protein sequence ID" value="AEE76351.1"/>
    <property type="molecule type" value="Genomic_DNA"/>
</dbReference>
<dbReference type="EMBL" id="BT005998">
    <property type="protein sequence ID" value="AAO64933.1"/>
    <property type="molecule type" value="mRNA"/>
</dbReference>
<dbReference type="EMBL" id="AK227419">
    <property type="protein sequence ID" value="BAE99423.1"/>
    <property type="molecule type" value="mRNA"/>
</dbReference>
<dbReference type="EMBL" id="AY085067">
    <property type="protein sequence ID" value="AAM61623.1"/>
    <property type="status" value="ALT_INIT"/>
    <property type="molecule type" value="mRNA"/>
</dbReference>
<dbReference type="RefSeq" id="NP_188659.1">
    <property type="nucleotide sequence ID" value="NM_112915.3"/>
</dbReference>
<dbReference type="SMR" id="Q9LJX5"/>
<dbReference type="FunCoup" id="Q9LJX5">
    <property type="interactions" value="734"/>
</dbReference>
<dbReference type="STRING" id="3702.Q9LJX5"/>
<dbReference type="PaxDb" id="3702-AT3G20240.1"/>
<dbReference type="ProteomicsDB" id="240571"/>
<dbReference type="EnsemblPlants" id="AT3G20240.1">
    <property type="protein sequence ID" value="AT3G20240.1"/>
    <property type="gene ID" value="AT3G20240"/>
</dbReference>
<dbReference type="GeneID" id="821568"/>
<dbReference type="Gramene" id="AT3G20240.1">
    <property type="protein sequence ID" value="AT3G20240.1"/>
    <property type="gene ID" value="AT3G20240"/>
</dbReference>
<dbReference type="KEGG" id="ath:AT3G20240"/>
<dbReference type="Araport" id="AT3G20240"/>
<dbReference type="TAIR" id="AT3G20240"/>
<dbReference type="eggNOG" id="KOG0752">
    <property type="taxonomic scope" value="Eukaryota"/>
</dbReference>
<dbReference type="HOGENOM" id="CLU_015166_10_8_1"/>
<dbReference type="InParanoid" id="Q9LJX5"/>
<dbReference type="OMA" id="EFPLQFL"/>
<dbReference type="OrthoDB" id="270584at2759"/>
<dbReference type="PhylomeDB" id="Q9LJX5"/>
<dbReference type="PRO" id="PR:Q9LJX5"/>
<dbReference type="Proteomes" id="UP000006548">
    <property type="component" value="Chromosome 3"/>
</dbReference>
<dbReference type="ExpressionAtlas" id="Q9LJX5">
    <property type="expression patterns" value="baseline and differential"/>
</dbReference>
<dbReference type="GO" id="GO:0005743">
    <property type="term" value="C:mitochondrial inner membrane"/>
    <property type="evidence" value="ECO:0007669"/>
    <property type="project" value="UniProtKB-SubCell"/>
</dbReference>
<dbReference type="GO" id="GO:0055085">
    <property type="term" value="P:transmembrane transport"/>
    <property type="evidence" value="ECO:0007669"/>
    <property type="project" value="InterPro"/>
</dbReference>
<dbReference type="Gene3D" id="1.50.40.10">
    <property type="entry name" value="Mitochondrial carrier domain"/>
    <property type="match status" value="1"/>
</dbReference>
<dbReference type="InterPro" id="IPR002067">
    <property type="entry name" value="Mit_carrier"/>
</dbReference>
<dbReference type="InterPro" id="IPR018108">
    <property type="entry name" value="Mitochondrial_sb/sol_carrier"/>
</dbReference>
<dbReference type="InterPro" id="IPR023395">
    <property type="entry name" value="Mt_carrier_dom_sf"/>
</dbReference>
<dbReference type="PANTHER" id="PTHR24089">
    <property type="entry name" value="SOLUTE CARRIER FAMILY 25"/>
    <property type="match status" value="1"/>
</dbReference>
<dbReference type="Pfam" id="PF00153">
    <property type="entry name" value="Mito_carr"/>
    <property type="match status" value="3"/>
</dbReference>
<dbReference type="PRINTS" id="PR00926">
    <property type="entry name" value="MITOCARRIER"/>
</dbReference>
<dbReference type="SUPFAM" id="SSF103506">
    <property type="entry name" value="Mitochondrial carrier"/>
    <property type="match status" value="1"/>
</dbReference>
<dbReference type="PROSITE" id="PS50920">
    <property type="entry name" value="SOLCAR"/>
    <property type="match status" value="3"/>
</dbReference>